<proteinExistence type="inferred from homology"/>
<sequence length="510" mass="56526">MKEEVLGLPIEKIQEKIKEYDFSPRISNIGYVKSVGDGVAQVSLLNAAFVGEIVIFESGIQGMVLSLKEDSVGVILFGRDEYVKEGEVVYSTGKILQVPTGSGFLGRVIDPLGNPIDGGGLIFPEAYVPVDNEAPSIFDREPVKEPLYTGIRAIDALIPIGHGQRELILGDRQTGKTTIAIDTIISQRNYGTICIYVAIAQKRTNIARIVQTLREYGALSNTIVIATFPDDPPALRYIAPMAGCAMGEYFMRQGERVLIVYDDLTKHANTYREVALLLRRVPGREAYPGDIFYLHSHLLERAAKLSRKLGGGALTALPIAETLAGEISTYIPTNLISITDGQIYLDTALFNAGVRPAINVGLSVSRVGGSAQPKGMRQVAGRLRLDLAQYREYAMFLEFGTELDMATKKKIERGRRIEELLKQGAHEVQSVEEQIITFYLANGGFLDNYPVEKVKDVVIKYIAYLKLKYSSVLTLLREQLELSDQIIYQIHNIFQEFEREVYANPSNPQA</sequence>
<name>ATPA_DICT6</name>
<keyword id="KW-0066">ATP synthesis</keyword>
<keyword id="KW-0067">ATP-binding</keyword>
<keyword id="KW-0997">Cell inner membrane</keyword>
<keyword id="KW-1003">Cell membrane</keyword>
<keyword id="KW-0139">CF(1)</keyword>
<keyword id="KW-0375">Hydrogen ion transport</keyword>
<keyword id="KW-0406">Ion transport</keyword>
<keyword id="KW-0472">Membrane</keyword>
<keyword id="KW-0547">Nucleotide-binding</keyword>
<keyword id="KW-1278">Translocase</keyword>
<keyword id="KW-0813">Transport</keyword>
<feature type="chain" id="PRO_1000143370" description="ATP synthase subunit alpha">
    <location>
        <begin position="1"/>
        <end position="510"/>
    </location>
</feature>
<feature type="binding site" evidence="1">
    <location>
        <begin position="170"/>
        <end position="177"/>
    </location>
    <ligand>
        <name>ATP</name>
        <dbReference type="ChEBI" id="CHEBI:30616"/>
    </ligand>
</feature>
<feature type="site" description="Required for activity" evidence="1">
    <location>
        <position position="363"/>
    </location>
</feature>
<dbReference type="EC" id="7.1.2.2" evidence="1"/>
<dbReference type="EMBL" id="CP001146">
    <property type="protein sequence ID" value="ACI19381.1"/>
    <property type="molecule type" value="Genomic_DNA"/>
</dbReference>
<dbReference type="RefSeq" id="WP_012548013.1">
    <property type="nucleotide sequence ID" value="NC_011297.1"/>
</dbReference>
<dbReference type="SMR" id="B5YBQ0"/>
<dbReference type="STRING" id="309799.DICTH_1860"/>
<dbReference type="PaxDb" id="309799-DICTH_1860"/>
<dbReference type="KEGG" id="dth:DICTH_1860"/>
<dbReference type="eggNOG" id="COG0056">
    <property type="taxonomic scope" value="Bacteria"/>
</dbReference>
<dbReference type="HOGENOM" id="CLU_010091_2_1_0"/>
<dbReference type="OrthoDB" id="9803053at2"/>
<dbReference type="Proteomes" id="UP000001733">
    <property type="component" value="Chromosome"/>
</dbReference>
<dbReference type="GO" id="GO:0005886">
    <property type="term" value="C:plasma membrane"/>
    <property type="evidence" value="ECO:0007669"/>
    <property type="project" value="UniProtKB-SubCell"/>
</dbReference>
<dbReference type="GO" id="GO:0045259">
    <property type="term" value="C:proton-transporting ATP synthase complex"/>
    <property type="evidence" value="ECO:0007669"/>
    <property type="project" value="UniProtKB-KW"/>
</dbReference>
<dbReference type="GO" id="GO:0043531">
    <property type="term" value="F:ADP binding"/>
    <property type="evidence" value="ECO:0007669"/>
    <property type="project" value="TreeGrafter"/>
</dbReference>
<dbReference type="GO" id="GO:0005524">
    <property type="term" value="F:ATP binding"/>
    <property type="evidence" value="ECO:0007669"/>
    <property type="project" value="UniProtKB-UniRule"/>
</dbReference>
<dbReference type="GO" id="GO:0046933">
    <property type="term" value="F:proton-transporting ATP synthase activity, rotational mechanism"/>
    <property type="evidence" value="ECO:0007669"/>
    <property type="project" value="UniProtKB-UniRule"/>
</dbReference>
<dbReference type="CDD" id="cd18113">
    <property type="entry name" value="ATP-synt_F1_alpha_C"/>
    <property type="match status" value="1"/>
</dbReference>
<dbReference type="CDD" id="cd18116">
    <property type="entry name" value="ATP-synt_F1_alpha_N"/>
    <property type="match status" value="1"/>
</dbReference>
<dbReference type="CDD" id="cd01132">
    <property type="entry name" value="F1-ATPase_alpha_CD"/>
    <property type="match status" value="1"/>
</dbReference>
<dbReference type="FunFam" id="1.20.150.20:FF:000001">
    <property type="entry name" value="ATP synthase subunit alpha"/>
    <property type="match status" value="1"/>
</dbReference>
<dbReference type="FunFam" id="3.40.50.300:FF:000002">
    <property type="entry name" value="ATP synthase subunit alpha"/>
    <property type="match status" value="1"/>
</dbReference>
<dbReference type="Gene3D" id="2.40.30.20">
    <property type="match status" value="1"/>
</dbReference>
<dbReference type="Gene3D" id="1.20.150.20">
    <property type="entry name" value="ATP synthase alpha/beta chain, C-terminal domain"/>
    <property type="match status" value="1"/>
</dbReference>
<dbReference type="Gene3D" id="3.40.50.300">
    <property type="entry name" value="P-loop containing nucleotide triphosphate hydrolases"/>
    <property type="match status" value="1"/>
</dbReference>
<dbReference type="HAMAP" id="MF_01346">
    <property type="entry name" value="ATP_synth_alpha_bact"/>
    <property type="match status" value="1"/>
</dbReference>
<dbReference type="InterPro" id="IPR023366">
    <property type="entry name" value="ATP_synth_asu-like_sf"/>
</dbReference>
<dbReference type="InterPro" id="IPR000793">
    <property type="entry name" value="ATP_synth_asu_C"/>
</dbReference>
<dbReference type="InterPro" id="IPR038376">
    <property type="entry name" value="ATP_synth_asu_C_sf"/>
</dbReference>
<dbReference type="InterPro" id="IPR033732">
    <property type="entry name" value="ATP_synth_F1_a_nt-bd_dom"/>
</dbReference>
<dbReference type="InterPro" id="IPR005294">
    <property type="entry name" value="ATP_synth_F1_asu"/>
</dbReference>
<dbReference type="InterPro" id="IPR020003">
    <property type="entry name" value="ATPase_a/bsu_AS"/>
</dbReference>
<dbReference type="InterPro" id="IPR004100">
    <property type="entry name" value="ATPase_F1/V1/A1_a/bsu_N"/>
</dbReference>
<dbReference type="InterPro" id="IPR036121">
    <property type="entry name" value="ATPase_F1/V1/A1_a/bsu_N_sf"/>
</dbReference>
<dbReference type="InterPro" id="IPR000194">
    <property type="entry name" value="ATPase_F1/V1/A1_a/bsu_nucl-bd"/>
</dbReference>
<dbReference type="InterPro" id="IPR027417">
    <property type="entry name" value="P-loop_NTPase"/>
</dbReference>
<dbReference type="NCBIfam" id="TIGR00962">
    <property type="entry name" value="atpA"/>
    <property type="match status" value="1"/>
</dbReference>
<dbReference type="NCBIfam" id="NF009884">
    <property type="entry name" value="PRK13343.1"/>
    <property type="match status" value="1"/>
</dbReference>
<dbReference type="PANTHER" id="PTHR48082">
    <property type="entry name" value="ATP SYNTHASE SUBUNIT ALPHA, MITOCHONDRIAL"/>
    <property type="match status" value="1"/>
</dbReference>
<dbReference type="PANTHER" id="PTHR48082:SF2">
    <property type="entry name" value="ATP SYNTHASE SUBUNIT ALPHA, MITOCHONDRIAL"/>
    <property type="match status" value="1"/>
</dbReference>
<dbReference type="Pfam" id="PF00006">
    <property type="entry name" value="ATP-synt_ab"/>
    <property type="match status" value="1"/>
</dbReference>
<dbReference type="Pfam" id="PF00306">
    <property type="entry name" value="ATP-synt_ab_C"/>
    <property type="match status" value="1"/>
</dbReference>
<dbReference type="Pfam" id="PF02874">
    <property type="entry name" value="ATP-synt_ab_N"/>
    <property type="match status" value="1"/>
</dbReference>
<dbReference type="SUPFAM" id="SSF47917">
    <property type="entry name" value="C-terminal domain of alpha and beta subunits of F1 ATP synthase"/>
    <property type="match status" value="1"/>
</dbReference>
<dbReference type="SUPFAM" id="SSF50615">
    <property type="entry name" value="N-terminal domain of alpha and beta subunits of F1 ATP synthase"/>
    <property type="match status" value="1"/>
</dbReference>
<dbReference type="SUPFAM" id="SSF52540">
    <property type="entry name" value="P-loop containing nucleoside triphosphate hydrolases"/>
    <property type="match status" value="1"/>
</dbReference>
<dbReference type="PROSITE" id="PS00152">
    <property type="entry name" value="ATPASE_ALPHA_BETA"/>
    <property type="match status" value="1"/>
</dbReference>
<gene>
    <name evidence="1" type="primary">atpA</name>
    <name type="ordered locus">DICTH_1860</name>
</gene>
<organism>
    <name type="scientific">Dictyoglomus thermophilum (strain ATCC 35947 / DSM 3960 / H-6-12)</name>
    <dbReference type="NCBI Taxonomy" id="309799"/>
    <lineage>
        <taxon>Bacteria</taxon>
        <taxon>Pseudomonadati</taxon>
        <taxon>Dictyoglomota</taxon>
        <taxon>Dictyoglomia</taxon>
        <taxon>Dictyoglomales</taxon>
        <taxon>Dictyoglomaceae</taxon>
        <taxon>Dictyoglomus</taxon>
    </lineage>
</organism>
<reference key="1">
    <citation type="journal article" date="2014" name="Genome Announc.">
        <title>Complete Genome Sequence of the Extreme Thermophile Dictyoglomus thermophilum H-6-12.</title>
        <authorList>
            <person name="Coil D.A."/>
            <person name="Badger J.H."/>
            <person name="Forberger H.C."/>
            <person name="Riggs F."/>
            <person name="Madupu R."/>
            <person name="Fedorova N."/>
            <person name="Ward N."/>
            <person name="Robb F.T."/>
            <person name="Eisen J.A."/>
        </authorList>
    </citation>
    <scope>NUCLEOTIDE SEQUENCE [LARGE SCALE GENOMIC DNA]</scope>
    <source>
        <strain>ATCC 35947 / DSM 3960 / H-6-12</strain>
    </source>
</reference>
<comment type="function">
    <text evidence="1">Produces ATP from ADP in the presence of a proton gradient across the membrane. The alpha chain is a regulatory subunit.</text>
</comment>
<comment type="catalytic activity">
    <reaction evidence="1">
        <text>ATP + H2O + 4 H(+)(in) = ADP + phosphate + 5 H(+)(out)</text>
        <dbReference type="Rhea" id="RHEA:57720"/>
        <dbReference type="ChEBI" id="CHEBI:15377"/>
        <dbReference type="ChEBI" id="CHEBI:15378"/>
        <dbReference type="ChEBI" id="CHEBI:30616"/>
        <dbReference type="ChEBI" id="CHEBI:43474"/>
        <dbReference type="ChEBI" id="CHEBI:456216"/>
        <dbReference type="EC" id="7.1.2.2"/>
    </reaction>
</comment>
<comment type="subunit">
    <text evidence="1">F-type ATPases have 2 components, CF(1) - the catalytic core - and CF(0) - the membrane proton channel. CF(1) has five subunits: alpha(3), beta(3), gamma(1), delta(1), epsilon(1). CF(0) has three main subunits: a(1), b(2) and c(9-12). The alpha and beta chains form an alternating ring which encloses part of the gamma chain. CF(1) is attached to CF(0) by a central stalk formed by the gamma and epsilon chains, while a peripheral stalk is formed by the delta and b chains.</text>
</comment>
<comment type="subcellular location">
    <subcellularLocation>
        <location evidence="1">Cell inner membrane</location>
        <topology evidence="1">Peripheral membrane protein</topology>
    </subcellularLocation>
</comment>
<comment type="similarity">
    <text evidence="1">Belongs to the ATPase alpha/beta chains family.</text>
</comment>
<protein>
    <recommendedName>
        <fullName evidence="1">ATP synthase subunit alpha</fullName>
        <ecNumber evidence="1">7.1.2.2</ecNumber>
    </recommendedName>
    <alternativeName>
        <fullName evidence="1">ATP synthase F1 sector subunit alpha</fullName>
    </alternativeName>
    <alternativeName>
        <fullName evidence="1">F-ATPase subunit alpha</fullName>
    </alternativeName>
</protein>
<accession>B5YBQ0</accession>
<evidence type="ECO:0000255" key="1">
    <source>
        <dbReference type="HAMAP-Rule" id="MF_01346"/>
    </source>
</evidence>